<evidence type="ECO:0000255" key="1">
    <source>
        <dbReference type="HAMAP-Rule" id="MF_01302"/>
    </source>
</evidence>
<evidence type="ECO:0000305" key="2"/>
<organism>
    <name type="scientific">Geotalea uraniireducens (strain Rf4)</name>
    <name type="common">Geobacter uraniireducens</name>
    <dbReference type="NCBI Taxonomy" id="351605"/>
    <lineage>
        <taxon>Bacteria</taxon>
        <taxon>Pseudomonadati</taxon>
        <taxon>Thermodesulfobacteriota</taxon>
        <taxon>Desulfuromonadia</taxon>
        <taxon>Geobacterales</taxon>
        <taxon>Geobacteraceae</taxon>
        <taxon>Geotalea</taxon>
    </lineage>
</organism>
<protein>
    <recommendedName>
        <fullName evidence="1">Small ribosomal subunit protein uS8</fullName>
    </recommendedName>
    <alternativeName>
        <fullName evidence="2">30S ribosomal protein S8</fullName>
    </alternativeName>
</protein>
<name>RS8_GEOUR</name>
<proteinExistence type="inferred from homology"/>
<comment type="function">
    <text evidence="1">One of the primary rRNA binding proteins, it binds directly to 16S rRNA central domain where it helps coordinate assembly of the platform of the 30S subunit.</text>
</comment>
<comment type="subunit">
    <text evidence="1">Part of the 30S ribosomal subunit. Contacts proteins S5 and S12.</text>
</comment>
<comment type="similarity">
    <text evidence="1">Belongs to the universal ribosomal protein uS8 family.</text>
</comment>
<gene>
    <name evidence="1" type="primary">rpsH</name>
    <name type="ordered locus">Gura_1080</name>
</gene>
<accession>A5GAV6</accession>
<keyword id="KW-1185">Reference proteome</keyword>
<keyword id="KW-0687">Ribonucleoprotein</keyword>
<keyword id="KW-0689">Ribosomal protein</keyword>
<keyword id="KW-0694">RNA-binding</keyword>
<keyword id="KW-0699">rRNA-binding</keyword>
<feature type="chain" id="PRO_1000085924" description="Small ribosomal subunit protein uS8">
    <location>
        <begin position="1"/>
        <end position="132"/>
    </location>
</feature>
<sequence length="132" mass="14483">MSMTDPIADMLTRIRNAGMAKHQKVDIPSSNLKVSLANLLRNEGFIKNYKVIADNKQGVLRVYLKYIDEKDPVINEIKRISKPGGRVYVDSDGIPKVKNGLGVAVLSTSKGIITDKTARELGVGGELLCTVW</sequence>
<dbReference type="EMBL" id="CP000698">
    <property type="protein sequence ID" value="ABQ25286.1"/>
    <property type="molecule type" value="Genomic_DNA"/>
</dbReference>
<dbReference type="RefSeq" id="WP_011938008.1">
    <property type="nucleotide sequence ID" value="NC_009483.1"/>
</dbReference>
<dbReference type="SMR" id="A5GAV6"/>
<dbReference type="STRING" id="351605.Gura_1080"/>
<dbReference type="KEGG" id="gur:Gura_1080"/>
<dbReference type="HOGENOM" id="CLU_098428_0_2_7"/>
<dbReference type="OrthoDB" id="9802617at2"/>
<dbReference type="Proteomes" id="UP000006695">
    <property type="component" value="Chromosome"/>
</dbReference>
<dbReference type="GO" id="GO:1990904">
    <property type="term" value="C:ribonucleoprotein complex"/>
    <property type="evidence" value="ECO:0007669"/>
    <property type="project" value="UniProtKB-KW"/>
</dbReference>
<dbReference type="GO" id="GO:0005840">
    <property type="term" value="C:ribosome"/>
    <property type="evidence" value="ECO:0007669"/>
    <property type="project" value="UniProtKB-KW"/>
</dbReference>
<dbReference type="GO" id="GO:0019843">
    <property type="term" value="F:rRNA binding"/>
    <property type="evidence" value="ECO:0007669"/>
    <property type="project" value="UniProtKB-UniRule"/>
</dbReference>
<dbReference type="GO" id="GO:0003735">
    <property type="term" value="F:structural constituent of ribosome"/>
    <property type="evidence" value="ECO:0007669"/>
    <property type="project" value="InterPro"/>
</dbReference>
<dbReference type="GO" id="GO:0006412">
    <property type="term" value="P:translation"/>
    <property type="evidence" value="ECO:0007669"/>
    <property type="project" value="UniProtKB-UniRule"/>
</dbReference>
<dbReference type="FunFam" id="3.30.1370.30:FF:000002">
    <property type="entry name" value="30S ribosomal protein S8"/>
    <property type="match status" value="1"/>
</dbReference>
<dbReference type="FunFam" id="3.30.1490.10:FF:000001">
    <property type="entry name" value="30S ribosomal protein S8"/>
    <property type="match status" value="1"/>
</dbReference>
<dbReference type="Gene3D" id="3.30.1370.30">
    <property type="match status" value="1"/>
</dbReference>
<dbReference type="Gene3D" id="3.30.1490.10">
    <property type="match status" value="1"/>
</dbReference>
<dbReference type="HAMAP" id="MF_01302_B">
    <property type="entry name" value="Ribosomal_uS8_B"/>
    <property type="match status" value="1"/>
</dbReference>
<dbReference type="InterPro" id="IPR000630">
    <property type="entry name" value="Ribosomal_uS8"/>
</dbReference>
<dbReference type="InterPro" id="IPR047863">
    <property type="entry name" value="Ribosomal_uS8_CS"/>
</dbReference>
<dbReference type="InterPro" id="IPR035987">
    <property type="entry name" value="Ribosomal_uS8_sf"/>
</dbReference>
<dbReference type="NCBIfam" id="NF001109">
    <property type="entry name" value="PRK00136.1"/>
    <property type="match status" value="1"/>
</dbReference>
<dbReference type="PANTHER" id="PTHR11758">
    <property type="entry name" value="40S RIBOSOMAL PROTEIN S15A"/>
    <property type="match status" value="1"/>
</dbReference>
<dbReference type="Pfam" id="PF00410">
    <property type="entry name" value="Ribosomal_S8"/>
    <property type="match status" value="1"/>
</dbReference>
<dbReference type="SUPFAM" id="SSF56047">
    <property type="entry name" value="Ribosomal protein S8"/>
    <property type="match status" value="1"/>
</dbReference>
<dbReference type="PROSITE" id="PS00053">
    <property type="entry name" value="RIBOSOMAL_S8"/>
    <property type="match status" value="1"/>
</dbReference>
<reference key="1">
    <citation type="submission" date="2007-05" db="EMBL/GenBank/DDBJ databases">
        <title>Complete sequence of Geobacter uraniireducens Rf4.</title>
        <authorList>
            <consortium name="US DOE Joint Genome Institute"/>
            <person name="Copeland A."/>
            <person name="Lucas S."/>
            <person name="Lapidus A."/>
            <person name="Barry K."/>
            <person name="Detter J.C."/>
            <person name="Glavina del Rio T."/>
            <person name="Hammon N."/>
            <person name="Israni S."/>
            <person name="Dalin E."/>
            <person name="Tice H."/>
            <person name="Pitluck S."/>
            <person name="Chertkov O."/>
            <person name="Brettin T."/>
            <person name="Bruce D."/>
            <person name="Han C."/>
            <person name="Schmutz J."/>
            <person name="Larimer F."/>
            <person name="Land M."/>
            <person name="Hauser L."/>
            <person name="Kyrpides N."/>
            <person name="Mikhailova N."/>
            <person name="Shelobolina E."/>
            <person name="Aklujkar M."/>
            <person name="Lovley D."/>
            <person name="Richardson P."/>
        </authorList>
    </citation>
    <scope>NUCLEOTIDE SEQUENCE [LARGE SCALE GENOMIC DNA]</scope>
    <source>
        <strain>ATCC BAA-1134 / JCM 13001 / Rf4</strain>
    </source>
</reference>